<keyword id="KW-0539">Nucleus</keyword>
<keyword id="KW-1185">Reference proteome</keyword>
<keyword id="KW-0687">Ribonucleoprotein</keyword>
<keyword id="KW-0690">Ribosome biogenesis</keyword>
<keyword id="KW-0698">rRNA processing</keyword>
<accession>A5E1F6</accession>
<evidence type="ECO:0000250" key="1"/>
<evidence type="ECO:0000256" key="2">
    <source>
        <dbReference type="SAM" id="MobiDB-lite"/>
    </source>
</evidence>
<evidence type="ECO:0000305" key="3"/>
<reference key="1">
    <citation type="journal article" date="2009" name="Nature">
        <title>Evolution of pathogenicity and sexual reproduction in eight Candida genomes.</title>
        <authorList>
            <person name="Butler G."/>
            <person name="Rasmussen M.D."/>
            <person name="Lin M.F."/>
            <person name="Santos M.A.S."/>
            <person name="Sakthikumar S."/>
            <person name="Munro C.A."/>
            <person name="Rheinbay E."/>
            <person name="Grabherr M."/>
            <person name="Forche A."/>
            <person name="Reedy J.L."/>
            <person name="Agrafioti I."/>
            <person name="Arnaud M.B."/>
            <person name="Bates S."/>
            <person name="Brown A.J.P."/>
            <person name="Brunke S."/>
            <person name="Costanzo M.C."/>
            <person name="Fitzpatrick D.A."/>
            <person name="de Groot P.W.J."/>
            <person name="Harris D."/>
            <person name="Hoyer L.L."/>
            <person name="Hube B."/>
            <person name="Klis F.M."/>
            <person name="Kodira C."/>
            <person name="Lennard N."/>
            <person name="Logue M.E."/>
            <person name="Martin R."/>
            <person name="Neiman A.M."/>
            <person name="Nikolaou E."/>
            <person name="Quail M.A."/>
            <person name="Quinn J."/>
            <person name="Santos M.C."/>
            <person name="Schmitzberger F.F."/>
            <person name="Sherlock G."/>
            <person name="Shah P."/>
            <person name="Silverstein K.A.T."/>
            <person name="Skrzypek M.S."/>
            <person name="Soll D."/>
            <person name="Staggs R."/>
            <person name="Stansfield I."/>
            <person name="Stumpf M.P.H."/>
            <person name="Sudbery P.E."/>
            <person name="Srikantha T."/>
            <person name="Zeng Q."/>
            <person name="Berman J."/>
            <person name="Berriman M."/>
            <person name="Heitman J."/>
            <person name="Gow N.A.R."/>
            <person name="Lorenz M.C."/>
            <person name="Birren B.W."/>
            <person name="Kellis M."/>
            <person name="Cuomo C.A."/>
        </authorList>
    </citation>
    <scope>NUCLEOTIDE SEQUENCE [LARGE SCALE GENOMIC DNA]</scope>
    <source>
        <strain>ATCC 11503 / BCRC 21390 / CBS 2605 / JCM 1781 / NBRC 1676 / NRRL YB-4239</strain>
    </source>
</reference>
<feature type="chain" id="PRO_0000408121" description="U3 small nucleolar RNA-associated protein 25">
    <location>
        <begin position="1"/>
        <end position="752"/>
    </location>
</feature>
<feature type="region of interest" description="Disordered" evidence="2">
    <location>
        <begin position="1"/>
        <end position="189"/>
    </location>
</feature>
<feature type="compositionally biased region" description="Basic and acidic residues" evidence="2">
    <location>
        <begin position="26"/>
        <end position="53"/>
    </location>
</feature>
<feature type="compositionally biased region" description="Basic and acidic residues" evidence="2">
    <location>
        <begin position="65"/>
        <end position="76"/>
    </location>
</feature>
<feature type="compositionally biased region" description="Acidic residues" evidence="2">
    <location>
        <begin position="77"/>
        <end position="87"/>
    </location>
</feature>
<feature type="compositionally biased region" description="Basic and acidic residues" evidence="2">
    <location>
        <begin position="102"/>
        <end position="118"/>
    </location>
</feature>
<feature type="compositionally biased region" description="Basic and acidic residues" evidence="2">
    <location>
        <begin position="127"/>
        <end position="136"/>
    </location>
</feature>
<feature type="compositionally biased region" description="Acidic residues" evidence="2">
    <location>
        <begin position="137"/>
        <end position="151"/>
    </location>
</feature>
<feature type="compositionally biased region" description="Acidic residues" evidence="2">
    <location>
        <begin position="159"/>
        <end position="183"/>
    </location>
</feature>
<protein>
    <recommendedName>
        <fullName>U3 small nucleolar RNA-associated protein 25</fullName>
        <shortName>U3 snoRNA-associated protein 25</shortName>
    </recommendedName>
    <alternativeName>
        <fullName>U three protein 25</fullName>
    </alternativeName>
</protein>
<proteinExistence type="inferred from homology"/>
<dbReference type="EMBL" id="CH981527">
    <property type="protein sequence ID" value="EDK45264.1"/>
    <property type="molecule type" value="Genomic_DNA"/>
</dbReference>
<dbReference type="RefSeq" id="XP_001525515.1">
    <property type="nucleotide sequence ID" value="XM_001525465.1"/>
</dbReference>
<dbReference type="FunCoup" id="A5E1F6">
    <property type="interactions" value="1219"/>
</dbReference>
<dbReference type="STRING" id="379508.A5E1F6"/>
<dbReference type="GeneID" id="5232878"/>
<dbReference type="KEGG" id="lel:PVL30_002934"/>
<dbReference type="VEuPathDB" id="FungiDB:LELG_03443"/>
<dbReference type="eggNOG" id="KOG2340">
    <property type="taxonomic scope" value="Eukaryota"/>
</dbReference>
<dbReference type="HOGENOM" id="CLU_018705_0_1_1"/>
<dbReference type="InParanoid" id="A5E1F6"/>
<dbReference type="OMA" id="GIMIFIP"/>
<dbReference type="OrthoDB" id="10264378at2759"/>
<dbReference type="Proteomes" id="UP000001996">
    <property type="component" value="Unassembled WGS sequence"/>
</dbReference>
<dbReference type="GO" id="GO:0005730">
    <property type="term" value="C:nucleolus"/>
    <property type="evidence" value="ECO:0007669"/>
    <property type="project" value="UniProtKB-SubCell"/>
</dbReference>
<dbReference type="GO" id="GO:0032040">
    <property type="term" value="C:small-subunit processome"/>
    <property type="evidence" value="ECO:0007669"/>
    <property type="project" value="EnsemblFungi"/>
</dbReference>
<dbReference type="GO" id="GO:0019843">
    <property type="term" value="F:rRNA binding"/>
    <property type="evidence" value="ECO:0007669"/>
    <property type="project" value="EnsemblFungi"/>
</dbReference>
<dbReference type="GO" id="GO:0034511">
    <property type="term" value="F:U3 snoRNA binding"/>
    <property type="evidence" value="ECO:0007669"/>
    <property type="project" value="EnsemblFungi"/>
</dbReference>
<dbReference type="GO" id="GO:0000462">
    <property type="term" value="P:maturation of SSU-rRNA from tricistronic rRNA transcript (SSU-rRNA, 5.8S rRNA, LSU-rRNA)"/>
    <property type="evidence" value="ECO:0007669"/>
    <property type="project" value="EnsemblFungi"/>
</dbReference>
<dbReference type="FunFam" id="3.40.50.300:FF:001559">
    <property type="entry name" value="U3 small nucleolar RNA-associated protein 25"/>
    <property type="match status" value="1"/>
</dbReference>
<dbReference type="Gene3D" id="3.40.50.300">
    <property type="entry name" value="P-loop containing nucleotide triphosphate hydrolases"/>
    <property type="match status" value="1"/>
</dbReference>
<dbReference type="InterPro" id="IPR027417">
    <property type="entry name" value="P-loop_NTPase"/>
</dbReference>
<dbReference type="InterPro" id="IPR010678">
    <property type="entry name" value="UTP25"/>
</dbReference>
<dbReference type="InterPro" id="IPR053939">
    <property type="entry name" value="UTP25_C"/>
</dbReference>
<dbReference type="InterPro" id="IPR053940">
    <property type="entry name" value="UTP25_NTPase-like"/>
</dbReference>
<dbReference type="PANTHER" id="PTHR12933">
    <property type="entry name" value="ORF PROTEIN-RELATED"/>
    <property type="match status" value="1"/>
</dbReference>
<dbReference type="PANTHER" id="PTHR12933:SF0">
    <property type="entry name" value="U3 SMALL NUCLEOLAR RNA-ASSOCIATED PROTEIN 25 HOMOLOG"/>
    <property type="match status" value="1"/>
</dbReference>
<dbReference type="Pfam" id="PF06862">
    <property type="entry name" value="Utp25_C"/>
    <property type="match status" value="1"/>
</dbReference>
<dbReference type="Pfam" id="PF22916">
    <property type="entry name" value="UTP25_NTPase-like"/>
    <property type="match status" value="1"/>
</dbReference>
<organism>
    <name type="scientific">Lodderomyces elongisporus (strain ATCC 11503 / CBS 2605 / JCM 1781 / NBRC 1676 / NRRL YB-4239)</name>
    <name type="common">Yeast</name>
    <name type="synonym">Saccharomyces elongisporus</name>
    <dbReference type="NCBI Taxonomy" id="379508"/>
    <lineage>
        <taxon>Eukaryota</taxon>
        <taxon>Fungi</taxon>
        <taxon>Dikarya</taxon>
        <taxon>Ascomycota</taxon>
        <taxon>Saccharomycotina</taxon>
        <taxon>Pichiomycetes</taxon>
        <taxon>Debaryomycetaceae</taxon>
        <taxon>Candida/Lodderomyces clade</taxon>
        <taxon>Lodderomyces</taxon>
    </lineage>
</organism>
<comment type="function">
    <text evidence="1">DEAD-box RNA helicase-like protein required for pre-18S rRNA processing, specifically at sites A0, A1, and A2.</text>
</comment>
<comment type="subunit">
    <text evidence="1">Component of the ribosomal small subunit (SSU) processome composed of at least 40 protein subunits and snoRNA U3.</text>
</comment>
<comment type="subcellular location">
    <subcellularLocation>
        <location evidence="1">Nucleus</location>
        <location evidence="1">Nucleolus</location>
    </subcellularLocation>
</comment>
<comment type="similarity">
    <text evidence="3">Belongs to the UTP25 family.</text>
</comment>
<name>UTP25_LODEL</name>
<gene>
    <name type="primary">UTP25</name>
    <name type="ORF">LELG_03443</name>
</gene>
<sequence>MARQVKRKSGADRNDGGGKYNSNNDRSVKRGRSELRTVTRTSRRDRGQDEQHNSHGTGGDFDIEGNVKDGRENVEQDKEEEEEEEDEDKGKAYEALLTLLKIEQKQEMKSGNKMENGRGLENTGSETGEKDNSAVKDDEDEDEDDFGEDENAGVVLEDQKEEEEEEKEDEDEDEEEEEDDEDTPAGINNDAFELHFNQPTEEYLEQEDKLVLKENAKWNIHKKESYDDLSLTSITQSPPGSSITIPSSLLKQKGTDISEYPLKKRVYTAFESTYGPSISKLESILLQPILNYQDINYQYKTFLNSSYRKLYALHALNHIYKTRDRILKNTAKLHQLNEDGDDLELRDQGFTRPKVLILLPTRDACNEIVEMIIKLSGTDQQENKKKFTTQFYTKAETRTNKPGDFQDAFKGNNNDFFCIGMKLTRKTLKLYSSFYSSDIILASPLGLSMILENPDKKKRQYDFISSIEVLIVDRANQIEMQNWDHVNTVMKYINKVPKEFHDADFSRIRMWSINDQAKLLRQTLVFSEYQTPAINNLVSSKSHNLAGKIRFKPVITSENSIMNSIGLRIKQVFQRFPSESPLADPDSRFKFFTNSIIPHLLQSSSYGNGIMIYIPSYFDYLRVKQHFKDSTKYNFGAIDEYSSQSKLTRTRHEFALGKIQIILYTERLHYFRRYEISGVKNLIMYVPPSNPLFYKELIRFIGKSVFKEECDLDLTWAKLIYSKWDANALERIVGNERAPVLCSSQNEQYEFR</sequence>